<accession>A0RHX6</accession>
<evidence type="ECO:0000255" key="1">
    <source>
        <dbReference type="HAMAP-Rule" id="MF_01851"/>
    </source>
</evidence>
<reference key="1">
    <citation type="journal article" date="2007" name="J. Bacteriol.">
        <title>The complete genome sequence of Bacillus thuringiensis Al Hakam.</title>
        <authorList>
            <person name="Challacombe J.F."/>
            <person name="Altherr M.R."/>
            <person name="Xie G."/>
            <person name="Bhotika S.S."/>
            <person name="Brown N."/>
            <person name="Bruce D."/>
            <person name="Campbell C.S."/>
            <person name="Campbell M.L."/>
            <person name="Chen J."/>
            <person name="Chertkov O."/>
            <person name="Cleland C."/>
            <person name="Dimitrijevic M."/>
            <person name="Doggett N.A."/>
            <person name="Fawcett J.J."/>
            <person name="Glavina T."/>
            <person name="Goodwin L.A."/>
            <person name="Green L.D."/>
            <person name="Han C.S."/>
            <person name="Hill K.K."/>
            <person name="Hitchcock P."/>
            <person name="Jackson P.J."/>
            <person name="Keim P."/>
            <person name="Kewalramani A.R."/>
            <person name="Longmire J."/>
            <person name="Lucas S."/>
            <person name="Malfatti S."/>
            <person name="Martinez D."/>
            <person name="McMurry K."/>
            <person name="Meincke L.J."/>
            <person name="Misra M."/>
            <person name="Moseman B.L."/>
            <person name="Mundt M."/>
            <person name="Munk A.C."/>
            <person name="Okinaka R.T."/>
            <person name="Parson-Quintana B."/>
            <person name="Reilly L.P."/>
            <person name="Richardson P."/>
            <person name="Robinson D.L."/>
            <person name="Saunders E."/>
            <person name="Tapia R."/>
            <person name="Tesmer J.G."/>
            <person name="Thayer N."/>
            <person name="Thompson L.S."/>
            <person name="Tice H."/>
            <person name="Ticknor L.O."/>
            <person name="Wills P.L."/>
            <person name="Gilna P."/>
            <person name="Brettin T.S."/>
        </authorList>
    </citation>
    <scope>NUCLEOTIDE SEQUENCE [LARGE SCALE GENOMIC DNA]</scope>
    <source>
        <strain>Al Hakam</strain>
    </source>
</reference>
<protein>
    <recommendedName>
        <fullName evidence="1">UPF0637 protein BALH_3586</fullName>
    </recommendedName>
</protein>
<organism>
    <name type="scientific">Bacillus thuringiensis (strain Al Hakam)</name>
    <dbReference type="NCBI Taxonomy" id="412694"/>
    <lineage>
        <taxon>Bacteria</taxon>
        <taxon>Bacillati</taxon>
        <taxon>Bacillota</taxon>
        <taxon>Bacilli</taxon>
        <taxon>Bacillales</taxon>
        <taxon>Bacillaceae</taxon>
        <taxon>Bacillus</taxon>
        <taxon>Bacillus cereus group</taxon>
    </lineage>
</organism>
<feature type="chain" id="PRO_0000348299" description="UPF0637 protein BALH_3586">
    <location>
        <begin position="1"/>
        <end position="208"/>
    </location>
</feature>
<comment type="similarity">
    <text evidence="1">Belongs to the UPF0637 family.</text>
</comment>
<name>Y3586_BACAH</name>
<dbReference type="EMBL" id="CP000485">
    <property type="protein sequence ID" value="ABK86819.1"/>
    <property type="molecule type" value="Genomic_DNA"/>
</dbReference>
<dbReference type="RefSeq" id="WP_000175083.1">
    <property type="nucleotide sequence ID" value="NC_008600.1"/>
</dbReference>
<dbReference type="SMR" id="A0RHX6"/>
<dbReference type="KEGG" id="btl:BALH_3586"/>
<dbReference type="HOGENOM" id="CLU_096059_0_0_9"/>
<dbReference type="Gene3D" id="3.30.930.20">
    <property type="entry name" value="Protein of unknown function DUF1054"/>
    <property type="match status" value="1"/>
</dbReference>
<dbReference type="HAMAP" id="MF_01851">
    <property type="entry name" value="UPF0637"/>
    <property type="match status" value="1"/>
</dbReference>
<dbReference type="InterPro" id="IPR009403">
    <property type="entry name" value="UPF0637"/>
</dbReference>
<dbReference type="InterPro" id="IPR053707">
    <property type="entry name" value="UPF0637_domain_sf"/>
</dbReference>
<dbReference type="Pfam" id="PF06335">
    <property type="entry name" value="DUF1054"/>
    <property type="match status" value="1"/>
</dbReference>
<dbReference type="PIRSF" id="PIRSF021332">
    <property type="entry name" value="DUF1054"/>
    <property type="match status" value="1"/>
</dbReference>
<dbReference type="SUPFAM" id="SSF142913">
    <property type="entry name" value="YktB/PF0168-like"/>
    <property type="match status" value="1"/>
</dbReference>
<sequence length="208" mass="24034">MTLQTFKSTDFEVFTVDGLEERMSAIKTNIHPKLEALGEQFAAYLSKQTDENFFYHVAKHARRKVNPPNDTWVAFSTNKRGYKMLPHFQIGLWGTHAFIYFGLIYECPQKVETAHAFLEHLNDLKTNIPNDFVWSIDHTKPSVKLHKTLETEDLQKMIERLATVKKAELLVGIHISPEEFSAMTNEQFLAKIESTMQSLLPLYALCNR</sequence>
<proteinExistence type="inferred from homology"/>
<gene>
    <name type="ordered locus">BALH_3586</name>
</gene>